<feature type="chain" id="PRO_0000373125" description="DNA-directed RNA polymerase RPB5 homolog">
    <location>
        <begin position="1"/>
        <end position="205"/>
    </location>
</feature>
<accession>P0C9B5</accession>
<protein>
    <recommendedName>
        <fullName evidence="2">DNA-directed RNA polymerase RPB5 homolog</fullName>
        <shortName evidence="3">RPB5 homolog</shortName>
    </recommendedName>
</protein>
<sequence length="205" mass="23664">MAMQKLFTYIYEFIEYRKMVLLEEKVPYDKFVQMVLNTGFFRINAETLNHGIVSVFIFGANGKYVHHGGDMRTLLTNTLNEKKHYEELILIVDKPVLSKKNILDIIVEQRAANPTIVINIYPYHLFCINIPKVSAIPKHKLITQEEAQEFLGREYLQPQDLMQISASDPPVVWLGGRPGDFVQIERPSETAMHAVVIRFITKSKI</sequence>
<evidence type="ECO:0000250" key="1">
    <source>
        <dbReference type="UniProtKB" id="P19388"/>
    </source>
</evidence>
<evidence type="ECO:0000250" key="2">
    <source>
        <dbReference type="UniProtKB" id="Q65181"/>
    </source>
</evidence>
<evidence type="ECO:0000305" key="3"/>
<organismHost>
    <name type="scientific">Ornithodoros</name>
    <name type="common">relapsing fever ticks</name>
    <dbReference type="NCBI Taxonomy" id="6937"/>
</organismHost>
<organismHost>
    <name type="scientific">Phacochoerus aethiopicus</name>
    <name type="common">Warthog</name>
    <dbReference type="NCBI Taxonomy" id="85517"/>
</organismHost>
<organismHost>
    <name type="scientific">Phacochoerus africanus</name>
    <name type="common">Warthog</name>
    <dbReference type="NCBI Taxonomy" id="41426"/>
</organismHost>
<organismHost>
    <name type="scientific">Potamochoerus larvatus</name>
    <name type="common">Bushpig</name>
    <dbReference type="NCBI Taxonomy" id="273792"/>
</organismHost>
<organismHost>
    <name type="scientific">Sus scrofa</name>
    <name type="common">Pig</name>
    <dbReference type="NCBI Taxonomy" id="9823"/>
</organismHost>
<comment type="function">
    <text evidence="1">Component of the DNA-directed RNA polymerase (RNAP) that catalyzes the transcription in the cytoplasm of viral DNA into RNA using the four ribonucleoside triphosphates as substrates.</text>
</comment>
<comment type="subunit">
    <text evidence="2">Part of the viral DNA-directed RNA polymerase that consists of 8 polII-like subunits (RPB1, RPB2, RPB3, RPB5, RPB6, RPB7, RPB9, RPB10), a capping enzyme and a termination factor.</text>
</comment>
<comment type="subcellular location">
    <subcellularLocation>
        <location evidence="3">Host cytoplasm</location>
    </subcellularLocation>
    <subcellularLocation>
        <location evidence="2">Virion</location>
    </subcellularLocation>
    <text evidence="2">Found in association with viral nucleoid.</text>
</comment>
<comment type="similarity">
    <text evidence="3">Belongs to the archaeal RpoH/eukaryotic RPB5 RNA polymerase subunit family.</text>
</comment>
<gene>
    <name type="ordered locus">War-118</name>
</gene>
<proteinExistence type="inferred from homology"/>
<organism>
    <name type="scientific">African swine fever virus (isolate Warthog/Namibia/Wart80/1980)</name>
    <name type="common">ASFV</name>
    <dbReference type="NCBI Taxonomy" id="561444"/>
    <lineage>
        <taxon>Viruses</taxon>
        <taxon>Varidnaviria</taxon>
        <taxon>Bamfordvirae</taxon>
        <taxon>Nucleocytoviricota</taxon>
        <taxon>Pokkesviricetes</taxon>
        <taxon>Asfuvirales</taxon>
        <taxon>Asfarviridae</taxon>
        <taxon>Asfivirus</taxon>
        <taxon>African swine fever virus</taxon>
    </lineage>
</organism>
<keyword id="KW-0240">DNA-directed RNA polymerase</keyword>
<keyword id="KW-1035">Host cytoplasm</keyword>
<keyword id="KW-0804">Transcription</keyword>
<keyword id="KW-0946">Virion</keyword>
<reference key="1">
    <citation type="submission" date="2003-03" db="EMBL/GenBank/DDBJ databases">
        <title>African swine fever virus genomes.</title>
        <authorList>
            <person name="Kutish G.F."/>
            <person name="Rock D.L."/>
        </authorList>
    </citation>
    <scope>NUCLEOTIDE SEQUENCE [LARGE SCALE GENOMIC DNA]</scope>
</reference>
<name>RPB5_ASFWA</name>
<dbReference type="EMBL" id="AY261366">
    <property type="status" value="NOT_ANNOTATED_CDS"/>
    <property type="molecule type" value="Genomic_DNA"/>
</dbReference>
<dbReference type="SMR" id="P0C9B5"/>
<dbReference type="Proteomes" id="UP000000858">
    <property type="component" value="Segment"/>
</dbReference>
<dbReference type="GO" id="GO:0000428">
    <property type="term" value="C:DNA-directed RNA polymerase complex"/>
    <property type="evidence" value="ECO:0007669"/>
    <property type="project" value="UniProtKB-KW"/>
</dbReference>
<dbReference type="GO" id="GO:0030430">
    <property type="term" value="C:host cell cytoplasm"/>
    <property type="evidence" value="ECO:0007669"/>
    <property type="project" value="UniProtKB-SubCell"/>
</dbReference>
<dbReference type="GO" id="GO:0044423">
    <property type="term" value="C:virion component"/>
    <property type="evidence" value="ECO:0007669"/>
    <property type="project" value="UniProtKB-KW"/>
</dbReference>
<dbReference type="GO" id="GO:0003677">
    <property type="term" value="F:DNA binding"/>
    <property type="evidence" value="ECO:0007669"/>
    <property type="project" value="InterPro"/>
</dbReference>
<dbReference type="GO" id="GO:0003899">
    <property type="term" value="F:DNA-directed RNA polymerase activity"/>
    <property type="evidence" value="ECO:0007669"/>
    <property type="project" value="InterPro"/>
</dbReference>
<dbReference type="GO" id="GO:0006366">
    <property type="term" value="P:transcription by RNA polymerase II"/>
    <property type="evidence" value="ECO:0007669"/>
    <property type="project" value="TreeGrafter"/>
</dbReference>
<dbReference type="GO" id="GO:0006362">
    <property type="term" value="P:transcription elongation by RNA polymerase I"/>
    <property type="evidence" value="ECO:0007669"/>
    <property type="project" value="TreeGrafter"/>
</dbReference>
<dbReference type="GO" id="GO:0042797">
    <property type="term" value="P:tRNA transcription by RNA polymerase III"/>
    <property type="evidence" value="ECO:0007669"/>
    <property type="project" value="TreeGrafter"/>
</dbReference>
<dbReference type="Gene3D" id="3.90.940.20">
    <property type="entry name" value="RPB5-like RNA polymerase subunit"/>
    <property type="match status" value="1"/>
</dbReference>
<dbReference type="InterPro" id="IPR014381">
    <property type="entry name" value="Arch_Rpo5/euc_Rpb5"/>
</dbReference>
<dbReference type="InterPro" id="IPR000783">
    <property type="entry name" value="RNA_pol_subH/Rpb5_C"/>
</dbReference>
<dbReference type="InterPro" id="IPR035913">
    <property type="entry name" value="RPB5-like_sf"/>
</dbReference>
<dbReference type="PANTHER" id="PTHR10535">
    <property type="entry name" value="DNA-DIRECTED RNA POLYMERASES I, II, AND III SUBUNIT RPABC1"/>
    <property type="match status" value="1"/>
</dbReference>
<dbReference type="PANTHER" id="PTHR10535:SF0">
    <property type="entry name" value="DNA-DIRECTED RNA POLYMERASES I, II, AND III SUBUNIT RPABC1"/>
    <property type="match status" value="1"/>
</dbReference>
<dbReference type="Pfam" id="PF01191">
    <property type="entry name" value="RNA_pol_Rpb5_C"/>
    <property type="match status" value="1"/>
</dbReference>
<dbReference type="SUPFAM" id="SSF55287">
    <property type="entry name" value="RPB5-like RNA polymerase subunit"/>
    <property type="match status" value="1"/>
</dbReference>